<organism>
    <name type="scientific">Escherichia coli O6:K15:H31 (strain 536 / UPEC)</name>
    <dbReference type="NCBI Taxonomy" id="362663"/>
    <lineage>
        <taxon>Bacteria</taxon>
        <taxon>Pseudomonadati</taxon>
        <taxon>Pseudomonadota</taxon>
        <taxon>Gammaproteobacteria</taxon>
        <taxon>Enterobacterales</taxon>
        <taxon>Enterobacteriaceae</taxon>
        <taxon>Escherichia</taxon>
    </lineage>
</organism>
<dbReference type="EC" id="4.1.99.1" evidence="1"/>
<dbReference type="EMBL" id="CP000247">
    <property type="protein sequence ID" value="ABG71879.1"/>
    <property type="molecule type" value="Genomic_DNA"/>
</dbReference>
<dbReference type="RefSeq" id="WP_001295247.1">
    <property type="nucleotide sequence ID" value="NC_008253.1"/>
</dbReference>
<dbReference type="SMR" id="Q0TB00"/>
<dbReference type="GeneID" id="75205423"/>
<dbReference type="KEGG" id="ecp:ECP_3908"/>
<dbReference type="HOGENOM" id="CLU_047223_0_0_6"/>
<dbReference type="UniPathway" id="UPA00332">
    <property type="reaction ID" value="UER00452"/>
</dbReference>
<dbReference type="Proteomes" id="UP000009182">
    <property type="component" value="Chromosome"/>
</dbReference>
<dbReference type="GO" id="GO:0009034">
    <property type="term" value="F:tryptophanase activity"/>
    <property type="evidence" value="ECO:0007669"/>
    <property type="project" value="UniProtKB-UniRule"/>
</dbReference>
<dbReference type="FunFam" id="3.40.640.10:FF:000039">
    <property type="entry name" value="Tryptophanase"/>
    <property type="match status" value="1"/>
</dbReference>
<dbReference type="Gene3D" id="3.90.1150.10">
    <property type="entry name" value="Aspartate Aminotransferase, domain 1"/>
    <property type="match status" value="1"/>
</dbReference>
<dbReference type="Gene3D" id="3.40.640.10">
    <property type="entry name" value="Type I PLP-dependent aspartate aminotransferase-like (Major domain)"/>
    <property type="match status" value="1"/>
</dbReference>
<dbReference type="HAMAP" id="MF_00544">
    <property type="entry name" value="Tryptophanase"/>
    <property type="match status" value="1"/>
</dbReference>
<dbReference type="InterPro" id="IPR001597">
    <property type="entry name" value="ArAA_b-elim_lyase/Thr_aldolase"/>
</dbReference>
<dbReference type="InterPro" id="IPR011166">
    <property type="entry name" value="Beta-eliminating_lyase"/>
</dbReference>
<dbReference type="InterPro" id="IPR015424">
    <property type="entry name" value="PyrdxlP-dep_Trfase"/>
</dbReference>
<dbReference type="InterPro" id="IPR015421">
    <property type="entry name" value="PyrdxlP-dep_Trfase_major"/>
</dbReference>
<dbReference type="InterPro" id="IPR015422">
    <property type="entry name" value="PyrdxlP-dep_Trfase_small"/>
</dbReference>
<dbReference type="InterPro" id="IPR013440">
    <property type="entry name" value="TNase"/>
</dbReference>
<dbReference type="InterPro" id="IPR018176">
    <property type="entry name" value="Tryptophanase_CS"/>
</dbReference>
<dbReference type="NCBIfam" id="NF009709">
    <property type="entry name" value="PRK13238.1"/>
    <property type="match status" value="1"/>
</dbReference>
<dbReference type="NCBIfam" id="TIGR02617">
    <property type="entry name" value="tnaA_trp_ase"/>
    <property type="match status" value="1"/>
</dbReference>
<dbReference type="PANTHER" id="PTHR32325">
    <property type="entry name" value="BETA-ELIMINATING LYASE-LIKE PROTEIN-RELATED"/>
    <property type="match status" value="1"/>
</dbReference>
<dbReference type="PANTHER" id="PTHR32325:SF4">
    <property type="entry name" value="TRYPTOPHANASE"/>
    <property type="match status" value="1"/>
</dbReference>
<dbReference type="Pfam" id="PF01212">
    <property type="entry name" value="Beta_elim_lyase"/>
    <property type="match status" value="1"/>
</dbReference>
<dbReference type="PIRSF" id="PIRSF001386">
    <property type="entry name" value="Trpase"/>
    <property type="match status" value="1"/>
</dbReference>
<dbReference type="SUPFAM" id="SSF53383">
    <property type="entry name" value="PLP-dependent transferases"/>
    <property type="match status" value="1"/>
</dbReference>
<dbReference type="PROSITE" id="PS00853">
    <property type="entry name" value="BETA_ELIM_LYASE"/>
    <property type="match status" value="1"/>
</dbReference>
<comment type="catalytic activity">
    <reaction evidence="1">
        <text>L-tryptophan + H2O = indole + pyruvate + NH4(+)</text>
        <dbReference type="Rhea" id="RHEA:19553"/>
        <dbReference type="ChEBI" id="CHEBI:15361"/>
        <dbReference type="ChEBI" id="CHEBI:15377"/>
        <dbReference type="ChEBI" id="CHEBI:16881"/>
        <dbReference type="ChEBI" id="CHEBI:28938"/>
        <dbReference type="ChEBI" id="CHEBI:57912"/>
        <dbReference type="EC" id="4.1.99.1"/>
    </reaction>
</comment>
<comment type="cofactor">
    <cofactor evidence="1">
        <name>pyridoxal 5'-phosphate</name>
        <dbReference type="ChEBI" id="CHEBI:597326"/>
    </cofactor>
</comment>
<comment type="pathway">
    <text evidence="1">Amino-acid degradation; L-tryptophan degradation via pyruvate pathway; indole and pyruvate from L-tryptophan: step 1/1.</text>
</comment>
<comment type="subunit">
    <text evidence="1">Homotetramer.</text>
</comment>
<comment type="similarity">
    <text evidence="1">Belongs to the beta-eliminating lyase family.</text>
</comment>
<accession>Q0TB00</accession>
<reference key="1">
    <citation type="journal article" date="2006" name="Mol. Microbiol.">
        <title>Role of pathogenicity island-associated integrases in the genome plasticity of uropathogenic Escherichia coli strain 536.</title>
        <authorList>
            <person name="Hochhut B."/>
            <person name="Wilde C."/>
            <person name="Balling G."/>
            <person name="Middendorf B."/>
            <person name="Dobrindt U."/>
            <person name="Brzuszkiewicz E."/>
            <person name="Gottschalk G."/>
            <person name="Carniel E."/>
            <person name="Hacker J."/>
        </authorList>
    </citation>
    <scope>NUCLEOTIDE SEQUENCE [LARGE SCALE GENOMIC DNA]</scope>
    <source>
        <strain>536 / UPEC</strain>
    </source>
</reference>
<keyword id="KW-0007">Acetylation</keyword>
<keyword id="KW-0456">Lyase</keyword>
<keyword id="KW-0663">Pyridoxal phosphate</keyword>
<keyword id="KW-0823">Tryptophan catabolism</keyword>
<gene>
    <name evidence="1" type="primary">tnaA</name>
    <name type="ordered locus">ECP_3908</name>
</gene>
<protein>
    <recommendedName>
        <fullName evidence="1">Tryptophanase</fullName>
        <ecNumber evidence="1">4.1.99.1</ecNumber>
    </recommendedName>
    <alternativeName>
        <fullName evidence="1">L-tryptophan indole-lyase</fullName>
        <shortName evidence="1">TNase</shortName>
    </alternativeName>
</protein>
<evidence type="ECO:0000255" key="1">
    <source>
        <dbReference type="HAMAP-Rule" id="MF_00544"/>
    </source>
</evidence>
<name>TNAA_ECOL5</name>
<feature type="chain" id="PRO_1000017730" description="Tryptophanase">
    <location>
        <begin position="1"/>
        <end position="471"/>
    </location>
</feature>
<feature type="modified residue" description="N6-acetyllysine" evidence="1">
    <location>
        <position position="5"/>
    </location>
</feature>
<feature type="modified residue" description="N6-acetyllysine" evidence="1">
    <location>
        <position position="115"/>
    </location>
</feature>
<feature type="modified residue" description="N6-acetyllysine" evidence="1">
    <location>
        <position position="156"/>
    </location>
</feature>
<feature type="modified residue" description="N6-(pyridoxal phosphate)lysine" evidence="1">
    <location>
        <position position="270"/>
    </location>
</feature>
<feature type="modified residue" description="N6-acetyllysine" evidence="1">
    <location>
        <position position="450"/>
    </location>
</feature>
<sequence>MENFKHLPEPFRIRVIEPVKRTTRAYREEAIIKSGMNPFLLDSEDVFIDLLTDSGTGAVTQSMQAAMMRGDEAYSGSRSYYALAESVKNIFGYQYTIPTHQGRGAEQIYIPVLIKKREQEKGLDRSKMVAFSNYFFDTTQGHSQINGCTVRNVYIKEAFDTGVRYDFKGNFDLEGLERGIEEVGPNNVPYIVATITSNSAGGQPVSLANLKAMYSIAKKYDIPVVMDSARFAENAYFIKQREAEYKDWTIEQITRETYKYADMLAMSAKKDAMVPMGGLLCMKDDSFFDVYTECRTLCVVQEGFPTYGGLEGGAMERLAVGLYDGMNLDWLAYRIAQVQYLVDGLEEIGVVCQQAGGHAAFVDAGKLLPHIPADQFPAQALACELYKVAGIRAVEIGSFLLGRDPKTGKQLPCPAELLRLTIPRATYTQTHMDFIIEAFKHVKENAANIKGLTFTYEPKVLRHFTAKLKEV</sequence>
<proteinExistence type="inferred from homology"/>